<gene>
    <name evidence="1" type="primary">grpE</name>
    <name type="ordered locus">Lreu_0705</name>
</gene>
<protein>
    <recommendedName>
        <fullName evidence="1">Protein GrpE</fullName>
    </recommendedName>
    <alternativeName>
        <fullName evidence="1">HSP-70 cofactor</fullName>
    </alternativeName>
</protein>
<name>GRPE_LIMRD</name>
<sequence>MAKEKQEEQQKQTAPENEKAPKKDIKKEASDKKGDQTSKLKEEIADLKKQLADKDDKYLRAEAEIQNMTNRFNKERAQILKYDGQDLAKSILPVLDNLKRALAIEVVDDNGKQLKKGIQMVHDHLVKALNDHGITEIKADGETFDPTLHQAVQTVPVEEGQKPETVVNVLQAGYQLKDRVLRPAMVVVAQ</sequence>
<comment type="function">
    <text evidence="1">Participates actively in the response to hyperosmotic and heat shock by preventing the aggregation of stress-denatured proteins, in association with DnaK and GrpE. It is the nucleotide exchange factor for DnaK and may function as a thermosensor. Unfolded proteins bind initially to DnaJ; upon interaction with the DnaJ-bound protein, DnaK hydrolyzes its bound ATP, resulting in the formation of a stable complex. GrpE releases ADP from DnaK; ATP binding to DnaK triggers the release of the substrate protein, thus completing the reaction cycle. Several rounds of ATP-dependent interactions between DnaJ, DnaK and GrpE are required for fully efficient folding.</text>
</comment>
<comment type="subunit">
    <text evidence="1">Homodimer.</text>
</comment>
<comment type="subcellular location">
    <subcellularLocation>
        <location evidence="1">Cytoplasm</location>
    </subcellularLocation>
</comment>
<comment type="similarity">
    <text evidence="1">Belongs to the GrpE family.</text>
</comment>
<dbReference type="EMBL" id="CP000705">
    <property type="protein sequence ID" value="ABQ82970.1"/>
    <property type="molecule type" value="Genomic_DNA"/>
</dbReference>
<dbReference type="RefSeq" id="WP_003668171.1">
    <property type="nucleotide sequence ID" value="NC_009513.1"/>
</dbReference>
<dbReference type="SMR" id="A5VJE6"/>
<dbReference type="STRING" id="557436.Lreu_0705"/>
<dbReference type="KEGG" id="lre:Lreu_0705"/>
<dbReference type="PATRIC" id="fig|557436.17.peg.550"/>
<dbReference type="eggNOG" id="COG0576">
    <property type="taxonomic scope" value="Bacteria"/>
</dbReference>
<dbReference type="HOGENOM" id="CLU_057217_6_3_9"/>
<dbReference type="OMA" id="PHRHQAI"/>
<dbReference type="Proteomes" id="UP000001991">
    <property type="component" value="Chromosome"/>
</dbReference>
<dbReference type="GO" id="GO:0005737">
    <property type="term" value="C:cytoplasm"/>
    <property type="evidence" value="ECO:0007669"/>
    <property type="project" value="UniProtKB-SubCell"/>
</dbReference>
<dbReference type="GO" id="GO:0000774">
    <property type="term" value="F:adenyl-nucleotide exchange factor activity"/>
    <property type="evidence" value="ECO:0007669"/>
    <property type="project" value="InterPro"/>
</dbReference>
<dbReference type="GO" id="GO:0042803">
    <property type="term" value="F:protein homodimerization activity"/>
    <property type="evidence" value="ECO:0007669"/>
    <property type="project" value="InterPro"/>
</dbReference>
<dbReference type="GO" id="GO:0051087">
    <property type="term" value="F:protein-folding chaperone binding"/>
    <property type="evidence" value="ECO:0007669"/>
    <property type="project" value="InterPro"/>
</dbReference>
<dbReference type="GO" id="GO:0051082">
    <property type="term" value="F:unfolded protein binding"/>
    <property type="evidence" value="ECO:0007669"/>
    <property type="project" value="TreeGrafter"/>
</dbReference>
<dbReference type="GO" id="GO:0006457">
    <property type="term" value="P:protein folding"/>
    <property type="evidence" value="ECO:0007669"/>
    <property type="project" value="InterPro"/>
</dbReference>
<dbReference type="CDD" id="cd00446">
    <property type="entry name" value="GrpE"/>
    <property type="match status" value="1"/>
</dbReference>
<dbReference type="FunFam" id="2.30.22.10:FF:000001">
    <property type="entry name" value="Protein GrpE"/>
    <property type="match status" value="1"/>
</dbReference>
<dbReference type="Gene3D" id="3.90.20.20">
    <property type="match status" value="1"/>
</dbReference>
<dbReference type="Gene3D" id="2.30.22.10">
    <property type="entry name" value="Head domain of nucleotide exchange factor GrpE"/>
    <property type="match status" value="1"/>
</dbReference>
<dbReference type="HAMAP" id="MF_01151">
    <property type="entry name" value="GrpE"/>
    <property type="match status" value="1"/>
</dbReference>
<dbReference type="InterPro" id="IPR000740">
    <property type="entry name" value="GrpE"/>
</dbReference>
<dbReference type="InterPro" id="IPR013805">
    <property type="entry name" value="GrpE_coiled_coil"/>
</dbReference>
<dbReference type="InterPro" id="IPR009012">
    <property type="entry name" value="GrpE_head"/>
</dbReference>
<dbReference type="NCBIfam" id="NF010738">
    <property type="entry name" value="PRK14140.1"/>
    <property type="match status" value="1"/>
</dbReference>
<dbReference type="NCBIfam" id="NF010759">
    <property type="entry name" value="PRK14162.1"/>
    <property type="match status" value="1"/>
</dbReference>
<dbReference type="PANTHER" id="PTHR21237">
    <property type="entry name" value="GRPE PROTEIN"/>
    <property type="match status" value="1"/>
</dbReference>
<dbReference type="PANTHER" id="PTHR21237:SF23">
    <property type="entry name" value="GRPE PROTEIN HOMOLOG, MITOCHONDRIAL"/>
    <property type="match status" value="1"/>
</dbReference>
<dbReference type="Pfam" id="PF01025">
    <property type="entry name" value="GrpE"/>
    <property type="match status" value="1"/>
</dbReference>
<dbReference type="PRINTS" id="PR00773">
    <property type="entry name" value="GRPEPROTEIN"/>
</dbReference>
<dbReference type="SUPFAM" id="SSF58014">
    <property type="entry name" value="Coiled-coil domain of nucleotide exchange factor GrpE"/>
    <property type="match status" value="1"/>
</dbReference>
<dbReference type="SUPFAM" id="SSF51064">
    <property type="entry name" value="Head domain of nucleotide exchange factor GrpE"/>
    <property type="match status" value="1"/>
</dbReference>
<dbReference type="PROSITE" id="PS01071">
    <property type="entry name" value="GRPE"/>
    <property type="match status" value="1"/>
</dbReference>
<feature type="chain" id="PRO_1000164197" description="Protein GrpE">
    <location>
        <begin position="1"/>
        <end position="190"/>
    </location>
</feature>
<feature type="region of interest" description="Disordered" evidence="2">
    <location>
        <begin position="1"/>
        <end position="41"/>
    </location>
</feature>
<keyword id="KW-0143">Chaperone</keyword>
<keyword id="KW-0963">Cytoplasm</keyword>
<keyword id="KW-1185">Reference proteome</keyword>
<keyword id="KW-0346">Stress response</keyword>
<evidence type="ECO:0000255" key="1">
    <source>
        <dbReference type="HAMAP-Rule" id="MF_01151"/>
    </source>
</evidence>
<evidence type="ECO:0000256" key="2">
    <source>
        <dbReference type="SAM" id="MobiDB-lite"/>
    </source>
</evidence>
<organism>
    <name type="scientific">Limosilactobacillus reuteri (strain DSM 20016)</name>
    <name type="common">Lactobacillus reuteri</name>
    <dbReference type="NCBI Taxonomy" id="557436"/>
    <lineage>
        <taxon>Bacteria</taxon>
        <taxon>Bacillati</taxon>
        <taxon>Bacillota</taxon>
        <taxon>Bacilli</taxon>
        <taxon>Lactobacillales</taxon>
        <taxon>Lactobacillaceae</taxon>
        <taxon>Limosilactobacillus</taxon>
    </lineage>
</organism>
<proteinExistence type="inferred from homology"/>
<accession>A5VJE6</accession>
<reference key="1">
    <citation type="journal article" date="2011" name="PLoS Genet.">
        <title>The evolution of host specialization in the vertebrate gut symbiont Lactobacillus reuteri.</title>
        <authorList>
            <person name="Frese S.A."/>
            <person name="Benson A.K."/>
            <person name="Tannock G.W."/>
            <person name="Loach D.M."/>
            <person name="Kim J."/>
            <person name="Zhang M."/>
            <person name="Oh P.L."/>
            <person name="Heng N.C."/>
            <person name="Patil P.B."/>
            <person name="Juge N."/>
            <person name="Mackenzie D.A."/>
            <person name="Pearson B.M."/>
            <person name="Lapidus A."/>
            <person name="Dalin E."/>
            <person name="Tice H."/>
            <person name="Goltsman E."/>
            <person name="Land M."/>
            <person name="Hauser L."/>
            <person name="Ivanova N."/>
            <person name="Kyrpides N.C."/>
            <person name="Walter J."/>
        </authorList>
    </citation>
    <scope>NUCLEOTIDE SEQUENCE [LARGE SCALE GENOMIC DNA]</scope>
    <source>
        <strain>DSM 20016</strain>
    </source>
</reference>